<sequence length="140" mass="14669">MKITNVRINQLVGEGKVKALVSVVFDGVLTVTDLKVVEGSKGLFVSMPSRKNKDGKFRDVVYPCTAEMRQAIQNAVLGAYDAMTRSGVAPQAGGLQGAEEPTAVEPAPQLQDESELPWEPGDDGEGARELAAVAGAVAAD</sequence>
<feature type="chain" id="PRO_0000157215" description="Putative septation protein SpoVG">
    <location>
        <begin position="1"/>
        <end position="140"/>
    </location>
</feature>
<feature type="region of interest" description="Disordered" evidence="2">
    <location>
        <begin position="88"/>
        <end position="127"/>
    </location>
</feature>
<feature type="compositionally biased region" description="Acidic residues" evidence="2">
    <location>
        <begin position="112"/>
        <end position="124"/>
    </location>
</feature>
<gene>
    <name evidence="1" type="primary">spoVG</name>
    <name type="ordered locus">STH3241</name>
</gene>
<proteinExistence type="inferred from homology"/>
<keyword id="KW-0131">Cell cycle</keyword>
<keyword id="KW-0132">Cell division</keyword>
<keyword id="KW-1185">Reference proteome</keyword>
<keyword id="KW-0717">Septation</keyword>
<name>SP5G_SYMTH</name>
<organism>
    <name type="scientific">Symbiobacterium thermophilum (strain DSM 24528 / JCM 14929 / IAM 14863 / T)</name>
    <dbReference type="NCBI Taxonomy" id="292459"/>
    <lineage>
        <taxon>Bacteria</taxon>
        <taxon>Bacillati</taxon>
        <taxon>Bacillota</taxon>
        <taxon>Clostridia</taxon>
        <taxon>Eubacteriales</taxon>
        <taxon>Symbiobacteriaceae</taxon>
        <taxon>Symbiobacterium</taxon>
    </lineage>
</organism>
<accession>Q67JC7</accession>
<evidence type="ECO:0000255" key="1">
    <source>
        <dbReference type="HAMAP-Rule" id="MF_00819"/>
    </source>
</evidence>
<evidence type="ECO:0000256" key="2">
    <source>
        <dbReference type="SAM" id="MobiDB-lite"/>
    </source>
</evidence>
<evidence type="ECO:0000305" key="3"/>
<dbReference type="EMBL" id="AP006840">
    <property type="protein sequence ID" value="BAD42223.1"/>
    <property type="status" value="ALT_INIT"/>
    <property type="molecule type" value="Genomic_DNA"/>
</dbReference>
<dbReference type="SMR" id="Q67JC7"/>
<dbReference type="STRING" id="292459.STH3241"/>
<dbReference type="KEGG" id="sth:STH3241"/>
<dbReference type="eggNOG" id="COG2088">
    <property type="taxonomic scope" value="Bacteria"/>
</dbReference>
<dbReference type="HOGENOM" id="CLU_1495467_0_0_9"/>
<dbReference type="OrthoDB" id="9796286at2"/>
<dbReference type="Proteomes" id="UP000000417">
    <property type="component" value="Chromosome"/>
</dbReference>
<dbReference type="GO" id="GO:0000917">
    <property type="term" value="P:division septum assembly"/>
    <property type="evidence" value="ECO:0007669"/>
    <property type="project" value="UniProtKB-KW"/>
</dbReference>
<dbReference type="GO" id="GO:0030435">
    <property type="term" value="P:sporulation resulting in formation of a cellular spore"/>
    <property type="evidence" value="ECO:0007669"/>
    <property type="project" value="InterPro"/>
</dbReference>
<dbReference type="Gene3D" id="3.30.1120.40">
    <property type="entry name" value="Stage V sporulation protein G"/>
    <property type="match status" value="1"/>
</dbReference>
<dbReference type="HAMAP" id="MF_00819">
    <property type="entry name" value="SpoVG"/>
    <property type="match status" value="1"/>
</dbReference>
<dbReference type="InterPro" id="IPR007170">
    <property type="entry name" value="SpoVG"/>
</dbReference>
<dbReference type="InterPro" id="IPR036751">
    <property type="entry name" value="SpoVG_sf"/>
</dbReference>
<dbReference type="PANTHER" id="PTHR38429">
    <property type="entry name" value="SEPTATION PROTEIN SPOVG-RELATED"/>
    <property type="match status" value="1"/>
</dbReference>
<dbReference type="PANTHER" id="PTHR38429:SF1">
    <property type="entry name" value="SEPTATION PROTEIN SPOVG-RELATED"/>
    <property type="match status" value="1"/>
</dbReference>
<dbReference type="Pfam" id="PF04026">
    <property type="entry name" value="SpoVG"/>
    <property type="match status" value="1"/>
</dbReference>
<dbReference type="SUPFAM" id="SSF160537">
    <property type="entry name" value="SpoVG-like"/>
    <property type="match status" value="1"/>
</dbReference>
<comment type="function">
    <text evidence="1">Could be involved in septation.</text>
</comment>
<comment type="similarity">
    <text evidence="1">Belongs to the SpoVG family.</text>
</comment>
<comment type="sequence caution" evidence="3">
    <conflict type="erroneous initiation">
        <sequence resource="EMBL-CDS" id="BAD42223"/>
    </conflict>
</comment>
<reference key="1">
    <citation type="journal article" date="2004" name="Nucleic Acids Res.">
        <title>Genome sequence of Symbiobacterium thermophilum, an uncultivable bacterium that depends on microbial commensalism.</title>
        <authorList>
            <person name="Ueda K."/>
            <person name="Yamashita A."/>
            <person name="Ishikawa J."/>
            <person name="Shimada M."/>
            <person name="Watsuji T."/>
            <person name="Morimura K."/>
            <person name="Ikeda H."/>
            <person name="Hattori M."/>
            <person name="Beppu T."/>
        </authorList>
    </citation>
    <scope>NUCLEOTIDE SEQUENCE [LARGE SCALE GENOMIC DNA]</scope>
    <source>
        <strain>DSM 24528 / JCM 14929 / IAM 14863 / T</strain>
    </source>
</reference>
<protein>
    <recommendedName>
        <fullName evidence="1">Putative septation protein SpoVG</fullName>
    </recommendedName>
</protein>